<keyword id="KW-0687">Ribonucleoprotein</keyword>
<keyword id="KW-0689">Ribosomal protein</keyword>
<keyword id="KW-0694">RNA-binding</keyword>
<keyword id="KW-0699">rRNA-binding</keyword>
<feature type="chain" id="PRO_0000128564" description="Large ribosomal subunit protein uL14">
    <location>
        <begin position="1"/>
        <end position="122"/>
    </location>
</feature>
<organism>
    <name type="scientific">Thermus aquaticus</name>
    <dbReference type="NCBI Taxonomy" id="271"/>
    <lineage>
        <taxon>Bacteria</taxon>
        <taxon>Thermotogati</taxon>
        <taxon>Deinococcota</taxon>
        <taxon>Deinococci</taxon>
        <taxon>Thermales</taxon>
        <taxon>Thermaceae</taxon>
        <taxon>Thermus</taxon>
    </lineage>
</organism>
<gene>
    <name evidence="1" type="primary">rplN</name>
    <name evidence="1" type="synonym">rpl14</name>
</gene>
<dbReference type="EMBL" id="X56552">
    <property type="protein sequence ID" value="CAA39894.1"/>
    <property type="molecule type" value="Genomic_DNA"/>
</dbReference>
<dbReference type="RefSeq" id="WP_003043914.1">
    <property type="nucleotide sequence ID" value="NZ_LHCI01000106.1"/>
</dbReference>
<dbReference type="SMR" id="P60557"/>
<dbReference type="GO" id="GO:0022625">
    <property type="term" value="C:cytosolic large ribosomal subunit"/>
    <property type="evidence" value="ECO:0007669"/>
    <property type="project" value="TreeGrafter"/>
</dbReference>
<dbReference type="GO" id="GO:0070180">
    <property type="term" value="F:large ribosomal subunit rRNA binding"/>
    <property type="evidence" value="ECO:0007669"/>
    <property type="project" value="TreeGrafter"/>
</dbReference>
<dbReference type="GO" id="GO:0003735">
    <property type="term" value="F:structural constituent of ribosome"/>
    <property type="evidence" value="ECO:0007669"/>
    <property type="project" value="InterPro"/>
</dbReference>
<dbReference type="GO" id="GO:0006412">
    <property type="term" value="P:translation"/>
    <property type="evidence" value="ECO:0007669"/>
    <property type="project" value="UniProtKB-UniRule"/>
</dbReference>
<dbReference type="CDD" id="cd00337">
    <property type="entry name" value="Ribosomal_uL14"/>
    <property type="match status" value="1"/>
</dbReference>
<dbReference type="FunFam" id="2.40.150.20:FF:000001">
    <property type="entry name" value="50S ribosomal protein L14"/>
    <property type="match status" value="1"/>
</dbReference>
<dbReference type="Gene3D" id="2.40.150.20">
    <property type="entry name" value="Ribosomal protein L14"/>
    <property type="match status" value="1"/>
</dbReference>
<dbReference type="HAMAP" id="MF_01367">
    <property type="entry name" value="Ribosomal_uL14"/>
    <property type="match status" value="1"/>
</dbReference>
<dbReference type="InterPro" id="IPR000218">
    <property type="entry name" value="Ribosomal_uL14"/>
</dbReference>
<dbReference type="InterPro" id="IPR005745">
    <property type="entry name" value="Ribosomal_uL14_bac-type"/>
</dbReference>
<dbReference type="InterPro" id="IPR019972">
    <property type="entry name" value="Ribosomal_uL14_CS"/>
</dbReference>
<dbReference type="InterPro" id="IPR036853">
    <property type="entry name" value="Ribosomal_uL14_sf"/>
</dbReference>
<dbReference type="NCBIfam" id="TIGR01067">
    <property type="entry name" value="rplN_bact"/>
    <property type="match status" value="1"/>
</dbReference>
<dbReference type="PANTHER" id="PTHR11761">
    <property type="entry name" value="50S/60S RIBOSOMAL PROTEIN L14/L23"/>
    <property type="match status" value="1"/>
</dbReference>
<dbReference type="PANTHER" id="PTHR11761:SF3">
    <property type="entry name" value="LARGE RIBOSOMAL SUBUNIT PROTEIN UL14M"/>
    <property type="match status" value="1"/>
</dbReference>
<dbReference type="Pfam" id="PF00238">
    <property type="entry name" value="Ribosomal_L14"/>
    <property type="match status" value="1"/>
</dbReference>
<dbReference type="SMART" id="SM01374">
    <property type="entry name" value="Ribosomal_L14"/>
    <property type="match status" value="1"/>
</dbReference>
<dbReference type="SUPFAM" id="SSF50193">
    <property type="entry name" value="Ribosomal protein L14"/>
    <property type="match status" value="1"/>
</dbReference>
<dbReference type="PROSITE" id="PS00049">
    <property type="entry name" value="RIBOSOMAL_L14"/>
    <property type="match status" value="1"/>
</dbReference>
<sequence length="122" mass="13289">MIQPQTYLEVADNTGARKIMCIRVLKGSNAKYATVGDVIVASVKEAIPRGAVKEGDVVKAVVVRTKKEVKRPDGSAIRFDDNAAVIINNQLEPRGTRVFGPVARELREKGFMKIVSLAPEVL</sequence>
<reference key="1">
    <citation type="journal article" date="1991" name="Eur. J. Biochem.">
        <title>Analysis of the spc ribosomal protein operon of Thermus aquaticus.</title>
        <authorList>
            <person name="Jahn O."/>
            <person name="Hartmann R.K."/>
            <person name="Erdmann V.A."/>
        </authorList>
    </citation>
    <scope>NUCLEOTIDE SEQUENCE [GENOMIC DNA]</scope>
    <source>
        <strain>EP 00276</strain>
    </source>
</reference>
<accession>P60557</accession>
<accession>P24317</accession>
<comment type="function">
    <text evidence="1">Binds to 23S rRNA. Forms part of two intersubunit bridges in the 70S ribosome.</text>
</comment>
<comment type="subunit">
    <text evidence="1">Part of the 50S ribosomal subunit. Forms a cluster with proteins L3 and L19. In the 70S ribosome, L14 and L19 interact and together make contacts with the 16S rRNA in bridges B5 and B8.</text>
</comment>
<comment type="similarity">
    <text evidence="1">Belongs to the universal ribosomal protein uL14 family.</text>
</comment>
<evidence type="ECO:0000255" key="1">
    <source>
        <dbReference type="HAMAP-Rule" id="MF_01367"/>
    </source>
</evidence>
<evidence type="ECO:0000305" key="2"/>
<protein>
    <recommendedName>
        <fullName evidence="1">Large ribosomal subunit protein uL14</fullName>
    </recommendedName>
    <alternativeName>
        <fullName evidence="2">50S ribosomal protein L14</fullName>
    </alternativeName>
</protein>
<name>RL14_THEAQ</name>
<proteinExistence type="inferred from homology"/>